<proteinExistence type="evidence at transcript level"/>
<evidence type="ECO:0000255" key="1"/>
<evidence type="ECO:0000255" key="2">
    <source>
        <dbReference type="PROSITE-ProRule" id="PRU00498"/>
    </source>
</evidence>
<evidence type="ECO:0000269" key="3">
    <source>
    </source>
</evidence>
<evidence type="ECO:0000303" key="4">
    <source>
    </source>
</evidence>
<evidence type="ECO:0000305" key="5"/>
<evidence type="ECO:0000305" key="6">
    <source>
    </source>
</evidence>
<sequence>MADANAMEGEKSIPTKIPHWRQVTDPGAVTPEIINYPYPGSGTEADPYLVQWIPSDPRNPMNYSAVKKWSITFVVAIATLAVALISSAYTGGAIEIAQEFHADAEVITLGVSLFVLGFAIGPLIWAPMSELFGRQLLFFGTYLALTAFNAGAAGSPNMATLLVLRFFAGSFGSSPLTNAGGVIADMFPASHRGLAMGIFAIAPFLGPVLGPVIGGFLGESAGWRWVEGFLAIFSGVVWIIGSIFLPETYPPVLLRKRAQRLSKLTGKVYASRMDIEQGKLSIGQAFKTALMRPWILLFREPIVLLLSTYMAIVYGTLYMLFSAFPVVYQQHRGWSPGIGGLAFLGVLGGILAAMVINLLDNKRYAKVSKEYNGFAPPEERLPVAIIGGIAIPIGLFWFAWTNGPQIHWIVSIIASAPFGFGMVLVFLSLMNYLIDAYTIYAASVLAANSVLRSLFGAAFPLFTRYMYQNLGIHWASTIPAFLALACVPFPFLFYIYGANIRKRCKFAGEADAFMQKLMQANSAHLESDLEVSEAGPIPRRNSLEAREVLDRIQSARSGLTRTRTAATVEYEGNPYDIDRVNTGLSRVSTTNSQTR</sequence>
<keyword id="KW-1003">Cell membrane</keyword>
<keyword id="KW-0325">Glycoprotein</keyword>
<keyword id="KW-0472">Membrane</keyword>
<keyword id="KW-1185">Reference proteome</keyword>
<keyword id="KW-0812">Transmembrane</keyword>
<keyword id="KW-1133">Transmembrane helix</keyword>
<keyword id="KW-0813">Transport</keyword>
<name>MFS2_TRIRC</name>
<reference key="1">
    <citation type="journal article" date="2012" name="MBio">
        <title>Comparative genome analysis of Trichophyton rubrum and related dermatophytes reveals candidate genes involved in infection.</title>
        <authorList>
            <person name="Martinez D.A."/>
            <person name="Oliver B.G."/>
            <person name="Graeser Y."/>
            <person name="Goldberg J.M."/>
            <person name="Li W."/>
            <person name="Martinez-Rossi N.M."/>
            <person name="Monod M."/>
            <person name="Shelest E."/>
            <person name="Barton R.C."/>
            <person name="Birch E."/>
            <person name="Brakhage A.A."/>
            <person name="Chen Z."/>
            <person name="Gurr S.J."/>
            <person name="Heiman D."/>
            <person name="Heitman J."/>
            <person name="Kosti I."/>
            <person name="Rossi A."/>
            <person name="Saif S."/>
            <person name="Samalova M."/>
            <person name="Saunders C.W."/>
            <person name="Shea T."/>
            <person name="Summerbell R.C."/>
            <person name="Xu J."/>
            <person name="Young S."/>
            <person name="Zeng Q."/>
            <person name="Birren B.W."/>
            <person name="Cuomo C.A."/>
            <person name="White T.C."/>
        </authorList>
    </citation>
    <scope>NUCLEOTIDE SEQUENCE [LARGE SCALE GENOMIC DNA]</scope>
    <source>
        <strain>ATCC MYA-4607 / CBS 118892</strain>
    </source>
</reference>
<reference key="2">
    <citation type="journal article" date="2019" name="Antimicrob. Agents Chemother.">
        <title>Trichophyton rubrum azole resistance mediated by a new ABC transporter, TruMDR3.</title>
        <authorList>
            <person name="Monod M."/>
            <person name="Feuermann M."/>
            <person name="Salamin K."/>
            <person name="Fratti M."/>
            <person name="Makino M."/>
            <person name="Alshahni M.M."/>
            <person name="Makimura K."/>
            <person name="Yamada T."/>
        </authorList>
    </citation>
    <scope>IDENTIFICATION</scope>
    <scope>FUNCTION</scope>
    <scope>INDUCTION</scope>
</reference>
<gene>
    <name evidence="4" type="primary">MFS2</name>
    <name type="ORF">TERG_08336</name>
</gene>
<dbReference type="EMBL" id="GG700660">
    <property type="protein sequence ID" value="EGD92121.1"/>
    <property type="molecule type" value="Genomic_DNA"/>
</dbReference>
<dbReference type="RefSeq" id="XP_003231249.1">
    <property type="nucleotide sequence ID" value="XM_003231201.1"/>
</dbReference>
<dbReference type="SMR" id="F2T0J9"/>
<dbReference type="STRING" id="559305.F2T0J9"/>
<dbReference type="GlyCosmos" id="F2T0J9">
    <property type="glycosylation" value="1 site, No reported glycans"/>
</dbReference>
<dbReference type="GeneID" id="10377525"/>
<dbReference type="eggNOG" id="KOG0255">
    <property type="taxonomic scope" value="Eukaryota"/>
</dbReference>
<dbReference type="HOGENOM" id="CLU_008455_11_6_1"/>
<dbReference type="InParanoid" id="F2T0J9"/>
<dbReference type="OMA" id="APMSELW"/>
<dbReference type="OrthoDB" id="446368at2759"/>
<dbReference type="Proteomes" id="UP000008864">
    <property type="component" value="Unassembled WGS sequence"/>
</dbReference>
<dbReference type="GO" id="GO:0005886">
    <property type="term" value="C:plasma membrane"/>
    <property type="evidence" value="ECO:0007669"/>
    <property type="project" value="UniProtKB-SubCell"/>
</dbReference>
<dbReference type="GO" id="GO:0022857">
    <property type="term" value="F:transmembrane transporter activity"/>
    <property type="evidence" value="ECO:0007669"/>
    <property type="project" value="InterPro"/>
</dbReference>
<dbReference type="CDD" id="cd17323">
    <property type="entry name" value="MFS_Tpo1_MDR_like"/>
    <property type="match status" value="1"/>
</dbReference>
<dbReference type="FunFam" id="1.20.1250.20:FF:000266">
    <property type="entry name" value="MFS multidrug transporter, putative"/>
    <property type="match status" value="1"/>
</dbReference>
<dbReference type="Gene3D" id="1.20.1250.20">
    <property type="entry name" value="MFS general substrate transporter like domains"/>
    <property type="match status" value="1"/>
</dbReference>
<dbReference type="InterPro" id="IPR011701">
    <property type="entry name" value="MFS"/>
</dbReference>
<dbReference type="InterPro" id="IPR020846">
    <property type="entry name" value="MFS_dom"/>
</dbReference>
<dbReference type="InterPro" id="IPR036259">
    <property type="entry name" value="MFS_trans_sf"/>
</dbReference>
<dbReference type="PANTHER" id="PTHR23502">
    <property type="entry name" value="MAJOR FACILITATOR SUPERFAMILY"/>
    <property type="match status" value="1"/>
</dbReference>
<dbReference type="PANTHER" id="PTHR23502:SF186">
    <property type="entry name" value="MAJOR FACILITATOR SUPERFAMILY (MFS) PROFILE DOMAIN-CONTAINING PROTEIN"/>
    <property type="match status" value="1"/>
</dbReference>
<dbReference type="Pfam" id="PF07690">
    <property type="entry name" value="MFS_1"/>
    <property type="match status" value="1"/>
</dbReference>
<dbReference type="SUPFAM" id="SSF103473">
    <property type="entry name" value="MFS general substrate transporter"/>
    <property type="match status" value="1"/>
</dbReference>
<dbReference type="PROSITE" id="PS50850">
    <property type="entry name" value="MFS"/>
    <property type="match status" value="1"/>
</dbReference>
<organism>
    <name type="scientific">Trichophyton rubrum (strain ATCC MYA-4607 / CBS 118892)</name>
    <name type="common">Athlete's foot fungus</name>
    <dbReference type="NCBI Taxonomy" id="559305"/>
    <lineage>
        <taxon>Eukaryota</taxon>
        <taxon>Fungi</taxon>
        <taxon>Dikarya</taxon>
        <taxon>Ascomycota</taxon>
        <taxon>Pezizomycotina</taxon>
        <taxon>Eurotiomycetes</taxon>
        <taxon>Eurotiomycetidae</taxon>
        <taxon>Onygenales</taxon>
        <taxon>Arthrodermataceae</taxon>
        <taxon>Trichophyton</taxon>
    </lineage>
</organism>
<protein>
    <recommendedName>
        <fullName evidence="4">MFS-type efflux pump MFS2</fullName>
    </recommendedName>
</protein>
<comment type="function">
    <text evidence="3">MFS-type efflux pump involved in the modulation susceptibility to fluconazole and voriconazole, 2 azoles with similar molecular structure.</text>
</comment>
<comment type="subcellular location">
    <subcellularLocation>
        <location evidence="6">Cell membrane</location>
        <topology evidence="1">Multi-pass membrane protein</topology>
    </subcellularLocation>
</comment>
<comment type="induction">
    <text evidence="3">Is slightly over-expressed in strain TIMM20092, and azole-resistant strain isolated in Switzerland.</text>
</comment>
<comment type="similarity">
    <text evidence="5">Belongs to the major facilitator superfamily. DHA1 family. Polyamines/proton antiporter (TC 2.A.1.2.16) subfamily.</text>
</comment>
<accession>F2T0J9</accession>
<feature type="chain" id="PRO_0000448447" description="MFS-type efflux pump MFS2">
    <location>
        <begin position="1"/>
        <end position="595"/>
    </location>
</feature>
<feature type="transmembrane region" description="Helical" evidence="1">
    <location>
        <begin position="69"/>
        <end position="89"/>
    </location>
</feature>
<feature type="transmembrane region" description="Helical" evidence="1">
    <location>
        <begin position="106"/>
        <end position="126"/>
    </location>
</feature>
<feature type="transmembrane region" description="Helical" evidence="1">
    <location>
        <begin position="136"/>
        <end position="156"/>
    </location>
</feature>
<feature type="transmembrane region" description="Helical" evidence="1">
    <location>
        <begin position="166"/>
        <end position="186"/>
    </location>
</feature>
<feature type="transmembrane region" description="Helical" evidence="1">
    <location>
        <begin position="197"/>
        <end position="217"/>
    </location>
</feature>
<feature type="transmembrane region" description="Helical" evidence="1">
    <location>
        <begin position="225"/>
        <end position="245"/>
    </location>
</feature>
<feature type="transmembrane region" description="Helical" evidence="1">
    <location>
        <begin position="301"/>
        <end position="321"/>
    </location>
</feature>
<feature type="transmembrane region" description="Helical" evidence="1">
    <location>
        <begin position="336"/>
        <end position="356"/>
    </location>
</feature>
<feature type="transmembrane region" description="Helical" evidence="1">
    <location>
        <begin position="381"/>
        <end position="401"/>
    </location>
</feature>
<feature type="transmembrane region" description="Helical" evidence="1">
    <location>
        <begin position="409"/>
        <end position="429"/>
    </location>
</feature>
<feature type="transmembrane region" description="Helical" evidence="1">
    <location>
        <begin position="442"/>
        <end position="462"/>
    </location>
</feature>
<feature type="transmembrane region" description="Helical" evidence="1">
    <location>
        <begin position="478"/>
        <end position="498"/>
    </location>
</feature>
<feature type="glycosylation site" description="N-linked (GlcNAc...) asparagine" evidence="2">
    <location>
        <position position="62"/>
    </location>
</feature>